<keyword id="KW-0963">Cytoplasm</keyword>
<keyword id="KW-0328">Glycosyltransferase</keyword>
<keyword id="KW-0660">Purine salvage</keyword>
<keyword id="KW-1185">Reference proteome</keyword>
<keyword id="KW-0808">Transferase</keyword>
<sequence>MVMSAAMEAVRARIRDVPDFPQKGIVFKDITPVLADPTTFREVIDAFVARWKDERISKVVGIESRGFLFAAPLAYALGAGLTIARKPGKLPWETIREVYSLEYGENSLELHIDAVKAGERVLVVDDVLATGGTADAVGRLVTRQGATLVAYSFLVELGFLGGAKRLGREHVHALLSY</sequence>
<accession>A7H8F4</accession>
<organism>
    <name type="scientific">Anaeromyxobacter sp. (strain Fw109-5)</name>
    <dbReference type="NCBI Taxonomy" id="404589"/>
    <lineage>
        <taxon>Bacteria</taxon>
        <taxon>Pseudomonadati</taxon>
        <taxon>Myxococcota</taxon>
        <taxon>Myxococcia</taxon>
        <taxon>Myxococcales</taxon>
        <taxon>Cystobacterineae</taxon>
        <taxon>Anaeromyxobacteraceae</taxon>
        <taxon>Anaeromyxobacter</taxon>
    </lineage>
</organism>
<protein>
    <recommendedName>
        <fullName evidence="1">Adenine phosphoribosyltransferase</fullName>
        <shortName evidence="1">APRT</shortName>
        <ecNumber evidence="1">2.4.2.7</ecNumber>
    </recommendedName>
</protein>
<evidence type="ECO:0000255" key="1">
    <source>
        <dbReference type="HAMAP-Rule" id="MF_00004"/>
    </source>
</evidence>
<gene>
    <name evidence="1" type="primary">apt</name>
    <name type="ordered locus">Anae109_0788</name>
</gene>
<comment type="function">
    <text evidence="1">Catalyzes a salvage reaction resulting in the formation of AMP, that is energically less costly than de novo synthesis.</text>
</comment>
<comment type="catalytic activity">
    <reaction evidence="1">
        <text>AMP + diphosphate = 5-phospho-alpha-D-ribose 1-diphosphate + adenine</text>
        <dbReference type="Rhea" id="RHEA:16609"/>
        <dbReference type="ChEBI" id="CHEBI:16708"/>
        <dbReference type="ChEBI" id="CHEBI:33019"/>
        <dbReference type="ChEBI" id="CHEBI:58017"/>
        <dbReference type="ChEBI" id="CHEBI:456215"/>
        <dbReference type="EC" id="2.4.2.7"/>
    </reaction>
</comment>
<comment type="pathway">
    <text evidence="1">Purine metabolism; AMP biosynthesis via salvage pathway; AMP from adenine: step 1/1.</text>
</comment>
<comment type="subunit">
    <text evidence="1">Homodimer.</text>
</comment>
<comment type="subcellular location">
    <subcellularLocation>
        <location evidence="1">Cytoplasm</location>
    </subcellularLocation>
</comment>
<comment type="similarity">
    <text evidence="1">Belongs to the purine/pyrimidine phosphoribosyltransferase family.</text>
</comment>
<reference key="1">
    <citation type="journal article" date="2015" name="Genome Announc.">
        <title>Complete genome sequence of Anaeromyxobacter sp. Fw109-5, an anaerobic, metal-reducing bacterium isolated from a contaminated subsurface environment.</title>
        <authorList>
            <person name="Hwang C."/>
            <person name="Copeland A."/>
            <person name="Lucas S."/>
            <person name="Lapidus A."/>
            <person name="Barry K."/>
            <person name="Glavina Del Rio T."/>
            <person name="Dalin E."/>
            <person name="Tice H."/>
            <person name="Pitluck S."/>
            <person name="Sims D."/>
            <person name="Brettin T."/>
            <person name="Bruce D.C."/>
            <person name="Detter J.C."/>
            <person name="Han C.S."/>
            <person name="Schmutz J."/>
            <person name="Larimer F.W."/>
            <person name="Land M.L."/>
            <person name="Hauser L.J."/>
            <person name="Kyrpides N."/>
            <person name="Lykidis A."/>
            <person name="Richardson P."/>
            <person name="Belieav A."/>
            <person name="Sanford R.A."/>
            <person name="Loeffler F.E."/>
            <person name="Fields M.W."/>
        </authorList>
    </citation>
    <scope>NUCLEOTIDE SEQUENCE [LARGE SCALE GENOMIC DNA]</scope>
    <source>
        <strain>Fw109-5</strain>
    </source>
</reference>
<name>APT_ANADF</name>
<proteinExistence type="inferred from homology"/>
<feature type="chain" id="PRO_0000321335" description="Adenine phosphoribosyltransferase">
    <location>
        <begin position="1"/>
        <end position="177"/>
    </location>
</feature>
<dbReference type="EC" id="2.4.2.7" evidence="1"/>
<dbReference type="EMBL" id="CP000769">
    <property type="protein sequence ID" value="ABS25000.1"/>
    <property type="molecule type" value="Genomic_DNA"/>
</dbReference>
<dbReference type="SMR" id="A7H8F4"/>
<dbReference type="STRING" id="404589.Anae109_0788"/>
<dbReference type="KEGG" id="afw:Anae109_0788"/>
<dbReference type="eggNOG" id="COG0503">
    <property type="taxonomic scope" value="Bacteria"/>
</dbReference>
<dbReference type="HOGENOM" id="CLU_063339_3_0_7"/>
<dbReference type="UniPathway" id="UPA00588">
    <property type="reaction ID" value="UER00646"/>
</dbReference>
<dbReference type="Proteomes" id="UP000006382">
    <property type="component" value="Chromosome"/>
</dbReference>
<dbReference type="GO" id="GO:0005737">
    <property type="term" value="C:cytoplasm"/>
    <property type="evidence" value="ECO:0007669"/>
    <property type="project" value="UniProtKB-SubCell"/>
</dbReference>
<dbReference type="GO" id="GO:0002055">
    <property type="term" value="F:adenine binding"/>
    <property type="evidence" value="ECO:0007669"/>
    <property type="project" value="TreeGrafter"/>
</dbReference>
<dbReference type="GO" id="GO:0003999">
    <property type="term" value="F:adenine phosphoribosyltransferase activity"/>
    <property type="evidence" value="ECO:0007669"/>
    <property type="project" value="UniProtKB-UniRule"/>
</dbReference>
<dbReference type="GO" id="GO:0016208">
    <property type="term" value="F:AMP binding"/>
    <property type="evidence" value="ECO:0007669"/>
    <property type="project" value="TreeGrafter"/>
</dbReference>
<dbReference type="GO" id="GO:0006168">
    <property type="term" value="P:adenine salvage"/>
    <property type="evidence" value="ECO:0007669"/>
    <property type="project" value="InterPro"/>
</dbReference>
<dbReference type="GO" id="GO:0044209">
    <property type="term" value="P:AMP salvage"/>
    <property type="evidence" value="ECO:0007669"/>
    <property type="project" value="UniProtKB-UniRule"/>
</dbReference>
<dbReference type="GO" id="GO:0006166">
    <property type="term" value="P:purine ribonucleoside salvage"/>
    <property type="evidence" value="ECO:0007669"/>
    <property type="project" value="UniProtKB-KW"/>
</dbReference>
<dbReference type="CDD" id="cd06223">
    <property type="entry name" value="PRTases_typeI"/>
    <property type="match status" value="1"/>
</dbReference>
<dbReference type="FunFam" id="3.40.50.2020:FF:000021">
    <property type="entry name" value="Adenine phosphoribosyltransferase"/>
    <property type="match status" value="1"/>
</dbReference>
<dbReference type="Gene3D" id="3.40.50.2020">
    <property type="match status" value="1"/>
</dbReference>
<dbReference type="HAMAP" id="MF_00004">
    <property type="entry name" value="Aden_phosphoribosyltr"/>
    <property type="match status" value="1"/>
</dbReference>
<dbReference type="InterPro" id="IPR005764">
    <property type="entry name" value="Ade_phspho_trans"/>
</dbReference>
<dbReference type="InterPro" id="IPR000836">
    <property type="entry name" value="PRibTrfase_dom"/>
</dbReference>
<dbReference type="InterPro" id="IPR029057">
    <property type="entry name" value="PRTase-like"/>
</dbReference>
<dbReference type="InterPro" id="IPR050054">
    <property type="entry name" value="UPRTase/APRTase"/>
</dbReference>
<dbReference type="NCBIfam" id="TIGR01090">
    <property type="entry name" value="apt"/>
    <property type="match status" value="1"/>
</dbReference>
<dbReference type="NCBIfam" id="NF002634">
    <property type="entry name" value="PRK02304.1-3"/>
    <property type="match status" value="1"/>
</dbReference>
<dbReference type="NCBIfam" id="NF002636">
    <property type="entry name" value="PRK02304.1-5"/>
    <property type="match status" value="1"/>
</dbReference>
<dbReference type="PANTHER" id="PTHR32315">
    <property type="entry name" value="ADENINE PHOSPHORIBOSYLTRANSFERASE"/>
    <property type="match status" value="1"/>
</dbReference>
<dbReference type="PANTHER" id="PTHR32315:SF3">
    <property type="entry name" value="ADENINE PHOSPHORIBOSYLTRANSFERASE"/>
    <property type="match status" value="1"/>
</dbReference>
<dbReference type="Pfam" id="PF00156">
    <property type="entry name" value="Pribosyltran"/>
    <property type="match status" value="1"/>
</dbReference>
<dbReference type="SUPFAM" id="SSF53271">
    <property type="entry name" value="PRTase-like"/>
    <property type="match status" value="1"/>
</dbReference>
<dbReference type="PROSITE" id="PS00103">
    <property type="entry name" value="PUR_PYR_PR_TRANSFER"/>
    <property type="match status" value="1"/>
</dbReference>